<sequence length="241" mass="25594">MHATEPNTGHGSQRAIRLAPSILSADFARLGEEVCAIEAGGADLVHFDVMDNHYVSNLTIGPLVCEAIRPLVSIPIDVHLMVEPVDALIPMFAKAGANLISFHPEASRHVDRTIGLIRDHGCKAGLVLNPATPLSWLDHTLDKLDLVLLMSVNPGFGGQAFIPGVLDKVRQARARIDRQVAAGGRPVWLEIDGGVKADNITEIARAGADTFVAGSAVFGAPDADGGYRGILHRLREAATIT</sequence>
<dbReference type="EC" id="5.1.3.1" evidence="1"/>
<dbReference type="EMBL" id="M64172">
    <property type="protein sequence ID" value="AAA98231.1"/>
    <property type="molecule type" value="Genomic_DNA"/>
</dbReference>
<dbReference type="EMBL" id="AY305378">
    <property type="protein sequence ID" value="AAP86172.1"/>
    <property type="molecule type" value="Genomic_DNA"/>
</dbReference>
<dbReference type="RefSeq" id="WP_011154335.1">
    <property type="nucleotide sequence ID" value="NC_005241.1"/>
</dbReference>
<dbReference type="SMR" id="Q04539"/>
<dbReference type="KEGG" id="reh:PHG423"/>
<dbReference type="PATRIC" id="fig|381666.6.peg.351"/>
<dbReference type="eggNOG" id="COG0036">
    <property type="taxonomic scope" value="Bacteria"/>
</dbReference>
<dbReference type="HOGENOM" id="CLU_054856_1_0_4"/>
<dbReference type="OrthoDB" id="1645589at2"/>
<dbReference type="Proteomes" id="UP000008210">
    <property type="component" value="Plasmid megaplasmid pHG1"/>
</dbReference>
<dbReference type="GO" id="GO:0004750">
    <property type="term" value="F:D-ribulose-phosphate 3-epimerase activity"/>
    <property type="evidence" value="ECO:0007669"/>
    <property type="project" value="UniProtKB-UniRule"/>
</dbReference>
<dbReference type="GO" id="GO:0046872">
    <property type="term" value="F:metal ion binding"/>
    <property type="evidence" value="ECO:0007669"/>
    <property type="project" value="UniProtKB-UniRule"/>
</dbReference>
<dbReference type="GO" id="GO:0019323">
    <property type="term" value="P:pentose catabolic process"/>
    <property type="evidence" value="ECO:0007669"/>
    <property type="project" value="UniProtKB-UniRule"/>
</dbReference>
<dbReference type="GO" id="GO:0006098">
    <property type="term" value="P:pentose-phosphate shunt"/>
    <property type="evidence" value="ECO:0007669"/>
    <property type="project" value="InterPro"/>
</dbReference>
<dbReference type="GO" id="GO:0019253">
    <property type="term" value="P:reductive pentose-phosphate cycle"/>
    <property type="evidence" value="ECO:0007669"/>
    <property type="project" value="UniProtKB-KW"/>
</dbReference>
<dbReference type="CDD" id="cd00429">
    <property type="entry name" value="RPE"/>
    <property type="match status" value="1"/>
</dbReference>
<dbReference type="FunFam" id="3.20.20.70:FF:000004">
    <property type="entry name" value="Ribulose-phosphate 3-epimerase"/>
    <property type="match status" value="1"/>
</dbReference>
<dbReference type="Gene3D" id="3.20.20.70">
    <property type="entry name" value="Aldolase class I"/>
    <property type="match status" value="1"/>
</dbReference>
<dbReference type="HAMAP" id="MF_02227">
    <property type="entry name" value="RPE"/>
    <property type="match status" value="1"/>
</dbReference>
<dbReference type="InterPro" id="IPR013785">
    <property type="entry name" value="Aldolase_TIM"/>
</dbReference>
<dbReference type="InterPro" id="IPR026019">
    <property type="entry name" value="Ribul_P_3_epim"/>
</dbReference>
<dbReference type="InterPro" id="IPR000056">
    <property type="entry name" value="Ribul_P_3_epim-like"/>
</dbReference>
<dbReference type="InterPro" id="IPR011060">
    <property type="entry name" value="RibuloseP-bd_barrel"/>
</dbReference>
<dbReference type="NCBIfam" id="NF004076">
    <property type="entry name" value="PRK05581.1-4"/>
    <property type="match status" value="1"/>
</dbReference>
<dbReference type="NCBIfam" id="TIGR01163">
    <property type="entry name" value="rpe"/>
    <property type="match status" value="1"/>
</dbReference>
<dbReference type="PANTHER" id="PTHR11749">
    <property type="entry name" value="RIBULOSE-5-PHOSPHATE-3-EPIMERASE"/>
    <property type="match status" value="1"/>
</dbReference>
<dbReference type="Pfam" id="PF00834">
    <property type="entry name" value="Ribul_P_3_epim"/>
    <property type="match status" value="1"/>
</dbReference>
<dbReference type="PIRSF" id="PIRSF001461">
    <property type="entry name" value="RPE"/>
    <property type="match status" value="1"/>
</dbReference>
<dbReference type="SUPFAM" id="SSF51366">
    <property type="entry name" value="Ribulose-phoshate binding barrel"/>
    <property type="match status" value="1"/>
</dbReference>
<dbReference type="PROSITE" id="PS01085">
    <property type="entry name" value="RIBUL_P_3_EPIMER_1"/>
    <property type="match status" value="1"/>
</dbReference>
<dbReference type="PROSITE" id="PS01086">
    <property type="entry name" value="RIBUL_P_3_EPIMER_2"/>
    <property type="match status" value="1"/>
</dbReference>
<gene>
    <name evidence="1" type="primary">rpe2</name>
    <name type="synonym">cbbEP</name>
    <name type="synonym">cfxE</name>
    <name type="ordered locus">PHG423</name>
</gene>
<proteinExistence type="inferred from homology"/>
<feature type="chain" id="PRO_0000171557" description="Ribulose-phosphate 3-epimerase 2">
    <location>
        <begin position="1"/>
        <end position="241"/>
    </location>
</feature>
<feature type="active site" description="Proton acceptor" evidence="1">
    <location>
        <position position="48"/>
    </location>
</feature>
<feature type="active site" description="Proton donor" evidence="1">
    <location>
        <position position="192"/>
    </location>
</feature>
<feature type="binding site" evidence="1">
    <location>
        <position position="21"/>
    </location>
    <ligand>
        <name>substrate</name>
    </ligand>
</feature>
<feature type="binding site" evidence="1">
    <location>
        <position position="46"/>
    </location>
    <ligand>
        <name>a divalent metal cation</name>
        <dbReference type="ChEBI" id="CHEBI:60240"/>
    </ligand>
</feature>
<feature type="binding site" evidence="1">
    <location>
        <position position="48"/>
    </location>
    <ligand>
        <name>a divalent metal cation</name>
        <dbReference type="ChEBI" id="CHEBI:60240"/>
    </ligand>
</feature>
<feature type="binding site" evidence="1">
    <location>
        <position position="79"/>
    </location>
    <ligand>
        <name>a divalent metal cation</name>
        <dbReference type="ChEBI" id="CHEBI:60240"/>
    </ligand>
</feature>
<feature type="binding site" evidence="1">
    <location>
        <position position="79"/>
    </location>
    <ligand>
        <name>substrate</name>
    </ligand>
</feature>
<feature type="binding site" evidence="1">
    <location>
        <begin position="155"/>
        <end position="158"/>
    </location>
    <ligand>
        <name>substrate</name>
    </ligand>
</feature>
<feature type="binding site" evidence="1">
    <location>
        <begin position="192"/>
        <end position="194"/>
    </location>
    <ligand>
        <name>substrate</name>
    </ligand>
</feature>
<feature type="binding site" evidence="1">
    <location>
        <position position="192"/>
    </location>
    <ligand>
        <name>a divalent metal cation</name>
        <dbReference type="ChEBI" id="CHEBI:60240"/>
    </ligand>
</feature>
<feature type="binding site" evidence="1">
    <location>
        <begin position="214"/>
        <end position="215"/>
    </location>
    <ligand>
        <name>substrate</name>
    </ligand>
</feature>
<name>RPE2_CUPNH</name>
<keyword id="KW-0113">Calvin cycle</keyword>
<keyword id="KW-0119">Carbohydrate metabolism</keyword>
<keyword id="KW-0413">Isomerase</keyword>
<keyword id="KW-0479">Metal-binding</keyword>
<keyword id="KW-0614">Plasmid</keyword>
<keyword id="KW-1185">Reference proteome</keyword>
<organism>
    <name type="scientific">Cupriavidus necator (strain ATCC 17699 / DSM 428 / KCTC 22496 / NCIMB 10442 / H16 / Stanier 337)</name>
    <name type="common">Ralstonia eutropha</name>
    <dbReference type="NCBI Taxonomy" id="381666"/>
    <lineage>
        <taxon>Bacteria</taxon>
        <taxon>Pseudomonadati</taxon>
        <taxon>Pseudomonadota</taxon>
        <taxon>Betaproteobacteria</taxon>
        <taxon>Burkholderiales</taxon>
        <taxon>Burkholderiaceae</taxon>
        <taxon>Cupriavidus</taxon>
    </lineage>
</organism>
<accession>Q04539</accession>
<reference key="1">
    <citation type="journal article" date="1992" name="J. Bacteriol.">
        <title>The Calvin cycle enzyme pentose-5-phosphate 3-epimerase is encoded within the cfx operons of the chemoautotroph Alcaligenes eutrophus.</title>
        <authorList>
            <person name="Kusian B."/>
            <person name="Yoo J.-G."/>
            <person name="Bednarski R."/>
            <person name="Bowien B."/>
        </authorList>
    </citation>
    <scope>NUCLEOTIDE SEQUENCE [GENOMIC DNA]</scope>
</reference>
<reference key="2">
    <citation type="journal article" date="2003" name="J. Mol. Biol.">
        <title>Complete nucleotide sequence of pHG1: a Ralstonia eutropha H16 megaplasmid encoding key enzymes of H(2)-based lithoautotrophy and anaerobiosis.</title>
        <authorList>
            <person name="Schwartz E."/>
            <person name="Henne A."/>
            <person name="Cramm R."/>
            <person name="Eitinger T."/>
            <person name="Friedrich B."/>
            <person name="Gottschalk G."/>
        </authorList>
    </citation>
    <scope>NUCLEOTIDE SEQUENCE [LARGE SCALE GENOMIC DNA]</scope>
    <source>
        <strain>ATCC 17699 / DSM 428 / KCTC 22496 / NCIMB 10442 / H16 / Stanier 337</strain>
    </source>
</reference>
<geneLocation type="plasmid">
    <name>megaplasmid pHG1</name>
</geneLocation>
<protein>
    <recommendedName>
        <fullName evidence="1">Ribulose-phosphate 3-epimerase 2</fullName>
        <ecNumber evidence="1">5.1.3.1</ecNumber>
    </recommendedName>
</protein>
<comment type="function">
    <text evidence="1">Catalyzes the reversible epimerization of D-ribulose 5-phosphate to D-xylulose 5-phosphate.</text>
</comment>
<comment type="catalytic activity">
    <reaction evidence="1">
        <text>D-ribulose 5-phosphate = D-xylulose 5-phosphate</text>
        <dbReference type="Rhea" id="RHEA:13677"/>
        <dbReference type="ChEBI" id="CHEBI:57737"/>
        <dbReference type="ChEBI" id="CHEBI:58121"/>
        <dbReference type="EC" id="5.1.3.1"/>
    </reaction>
</comment>
<comment type="cofactor">
    <cofactor evidence="1">
        <name>a divalent metal cation</name>
        <dbReference type="ChEBI" id="CHEBI:60240"/>
    </cofactor>
    <text evidence="1">Binds 1 divalent metal cation per subunit.</text>
</comment>
<comment type="pathway">
    <text evidence="1">Carbohydrate degradation.</text>
</comment>
<comment type="similarity">
    <text evidence="1">Belongs to the ribulose-phosphate 3-epimerase family.</text>
</comment>
<evidence type="ECO:0000255" key="1">
    <source>
        <dbReference type="HAMAP-Rule" id="MF_02227"/>
    </source>
</evidence>